<proteinExistence type="inferred from homology"/>
<comment type="function">
    <text evidence="1">ATP-binding RNA helicase involved in mitochondrial RNA metabolism. Required for maintenance of mitochondrial DNA (By similarity).</text>
</comment>
<comment type="catalytic activity">
    <reaction>
        <text>ATP + H2O = ADP + phosphate + H(+)</text>
        <dbReference type="Rhea" id="RHEA:13065"/>
        <dbReference type="ChEBI" id="CHEBI:15377"/>
        <dbReference type="ChEBI" id="CHEBI:15378"/>
        <dbReference type="ChEBI" id="CHEBI:30616"/>
        <dbReference type="ChEBI" id="CHEBI:43474"/>
        <dbReference type="ChEBI" id="CHEBI:456216"/>
        <dbReference type="EC" id="3.6.4.13"/>
    </reaction>
</comment>
<comment type="subcellular location">
    <subcellularLocation>
        <location evidence="1">Mitochondrion</location>
    </subcellularLocation>
</comment>
<comment type="domain">
    <text>The Q motif is unique to and characteristic of the DEAD box family of RNA helicases and controls ATP binding and hydrolysis.</text>
</comment>
<comment type="similarity">
    <text evidence="5">Belongs to the DEAD box helicase family. MRH4 subfamily.</text>
</comment>
<protein>
    <recommendedName>
        <fullName>ATP-dependent RNA helicase MRH4, mitochondrial</fullName>
        <ecNumber>3.6.4.13</ecNumber>
    </recommendedName>
</protein>
<gene>
    <name type="primary">MRH4</name>
    <name type="ordered locus">DEHA2C04378g</name>
</gene>
<organism>
    <name type="scientific">Debaryomyces hansenii (strain ATCC 36239 / CBS 767 / BCRC 21394 / JCM 1990 / NBRC 0083 / IGC 2968)</name>
    <name type="common">Yeast</name>
    <name type="synonym">Torulaspora hansenii</name>
    <dbReference type="NCBI Taxonomy" id="284592"/>
    <lineage>
        <taxon>Eukaryota</taxon>
        <taxon>Fungi</taxon>
        <taxon>Dikarya</taxon>
        <taxon>Ascomycota</taxon>
        <taxon>Saccharomycotina</taxon>
        <taxon>Pichiomycetes</taxon>
        <taxon>Debaryomycetaceae</taxon>
        <taxon>Debaryomyces</taxon>
    </lineage>
</organism>
<accession>Q6BV94</accession>
<reference key="1">
    <citation type="journal article" date="2004" name="Nature">
        <title>Genome evolution in yeasts.</title>
        <authorList>
            <person name="Dujon B."/>
            <person name="Sherman D."/>
            <person name="Fischer G."/>
            <person name="Durrens P."/>
            <person name="Casaregola S."/>
            <person name="Lafontaine I."/>
            <person name="de Montigny J."/>
            <person name="Marck C."/>
            <person name="Neuveglise C."/>
            <person name="Talla E."/>
            <person name="Goffard N."/>
            <person name="Frangeul L."/>
            <person name="Aigle M."/>
            <person name="Anthouard V."/>
            <person name="Babour A."/>
            <person name="Barbe V."/>
            <person name="Barnay S."/>
            <person name="Blanchin S."/>
            <person name="Beckerich J.-M."/>
            <person name="Beyne E."/>
            <person name="Bleykasten C."/>
            <person name="Boisrame A."/>
            <person name="Boyer J."/>
            <person name="Cattolico L."/>
            <person name="Confanioleri F."/>
            <person name="de Daruvar A."/>
            <person name="Despons L."/>
            <person name="Fabre E."/>
            <person name="Fairhead C."/>
            <person name="Ferry-Dumazet H."/>
            <person name="Groppi A."/>
            <person name="Hantraye F."/>
            <person name="Hennequin C."/>
            <person name="Jauniaux N."/>
            <person name="Joyet P."/>
            <person name="Kachouri R."/>
            <person name="Kerrest A."/>
            <person name="Koszul R."/>
            <person name="Lemaire M."/>
            <person name="Lesur I."/>
            <person name="Ma L."/>
            <person name="Muller H."/>
            <person name="Nicaud J.-M."/>
            <person name="Nikolski M."/>
            <person name="Oztas S."/>
            <person name="Ozier-Kalogeropoulos O."/>
            <person name="Pellenz S."/>
            <person name="Potier S."/>
            <person name="Richard G.-F."/>
            <person name="Straub M.-L."/>
            <person name="Suleau A."/>
            <person name="Swennen D."/>
            <person name="Tekaia F."/>
            <person name="Wesolowski-Louvel M."/>
            <person name="Westhof E."/>
            <person name="Wirth B."/>
            <person name="Zeniou-Meyer M."/>
            <person name="Zivanovic Y."/>
            <person name="Bolotin-Fukuhara M."/>
            <person name="Thierry A."/>
            <person name="Bouchier C."/>
            <person name="Caudron B."/>
            <person name="Scarpelli C."/>
            <person name="Gaillardin C."/>
            <person name="Weissenbach J."/>
            <person name="Wincker P."/>
            <person name="Souciet J.-L."/>
        </authorList>
    </citation>
    <scope>NUCLEOTIDE SEQUENCE [LARGE SCALE GENOMIC DNA]</scope>
    <source>
        <strain>ATCC 36239 / CBS 767 / BCRC 21394 / JCM 1990 / NBRC 0083 / IGC 2968</strain>
    </source>
</reference>
<name>MRH4_DEBHA</name>
<evidence type="ECO:0000250" key="1"/>
<evidence type="ECO:0000255" key="2"/>
<evidence type="ECO:0000255" key="3">
    <source>
        <dbReference type="PROSITE-ProRule" id="PRU00541"/>
    </source>
</evidence>
<evidence type="ECO:0000255" key="4">
    <source>
        <dbReference type="PROSITE-ProRule" id="PRU00542"/>
    </source>
</evidence>
<evidence type="ECO:0000305" key="5"/>
<sequence>MTLKIGGIVPIVRVMRDTIIQRPVSTFVRYHSKRSRSFKKKANHKPGQVIRSKLGKTLEAPKTQPKLFSFGNFSGLDQPENKLKEMSSNAIKNITSFESLRIFPTVRSAMLEEIKYGYNLKSTYIKSKEELEIKPSPVQIAAIRKINQPRLRNVNAEKKLADKKASGQEILEDLQKSNEMNRLKIFTIAAETGSGKTWAYLAPLLSKLKEEDMRVFNMSEQSYADAKKTSIIRSVILLPTHELVEQVYDSLKRASKASIDLEASVNKKILQDPQYARYLSLPENQTSLNLNVVKWGSGDSHQKLFDAGRKRIDVLVTTPAKIQGLAKLNNVSRPFRLFNFVEYCVVDEADTLMDKSWIVDTTSVIRRLSKCKDLIFCSATIPKEFKKTLGKMFPDEFSIINIVTPSLHKIPKQINLKVIDAQLSPYNGSKTRCLAQALYAIHNDGTEQGYVKRILVFVNEKRDVQPLADTLIEKFGHREEDIIGITGADNADDRLAKIEPFLKPAELLEEDLDGSKVKVLITTDLLARGLNFNGIKNVILMDLPNTSVDLVHRVGRTGRMRQSGRVFVIIDKKTGKSWIKGLPKVIKKGIPLG</sequence>
<feature type="transit peptide" description="Mitochondrion" evidence="2">
    <location>
        <begin position="1"/>
        <end position="36"/>
    </location>
</feature>
<feature type="chain" id="PRO_0000232352" description="ATP-dependent RNA helicase MRH4, mitochondrial">
    <location>
        <begin position="37"/>
        <end position="593"/>
    </location>
</feature>
<feature type="domain" description="Helicase ATP-binding" evidence="3">
    <location>
        <begin position="177"/>
        <end position="399"/>
    </location>
</feature>
<feature type="domain" description="Helicase C-terminal" evidence="4">
    <location>
        <begin position="433"/>
        <end position="593"/>
    </location>
</feature>
<feature type="short sequence motif" description="Q motif">
    <location>
        <begin position="132"/>
        <end position="139"/>
    </location>
</feature>
<feature type="short sequence motif" description="DEAD box">
    <location>
        <begin position="347"/>
        <end position="350"/>
    </location>
</feature>
<feature type="binding site" evidence="3">
    <location>
        <begin position="190"/>
        <end position="197"/>
    </location>
    <ligand>
        <name>ATP</name>
        <dbReference type="ChEBI" id="CHEBI:30616"/>
    </ligand>
</feature>
<keyword id="KW-0067">ATP-binding</keyword>
<keyword id="KW-0347">Helicase</keyword>
<keyword id="KW-0378">Hydrolase</keyword>
<keyword id="KW-0496">Mitochondrion</keyword>
<keyword id="KW-0547">Nucleotide-binding</keyword>
<keyword id="KW-1185">Reference proteome</keyword>
<keyword id="KW-0694">RNA-binding</keyword>
<keyword id="KW-0809">Transit peptide</keyword>
<dbReference type="EC" id="3.6.4.13"/>
<dbReference type="EMBL" id="CR382135">
    <property type="protein sequence ID" value="CAG85921.1"/>
    <property type="molecule type" value="Genomic_DNA"/>
</dbReference>
<dbReference type="RefSeq" id="XP_457875.1">
    <property type="nucleotide sequence ID" value="XM_457875.1"/>
</dbReference>
<dbReference type="SMR" id="Q6BV94"/>
<dbReference type="FunCoup" id="Q6BV94">
    <property type="interactions" value="154"/>
</dbReference>
<dbReference type="STRING" id="284592.Q6BV94"/>
<dbReference type="GeneID" id="2900163"/>
<dbReference type="KEGG" id="dha:DEHA2C04378g"/>
<dbReference type="VEuPathDB" id="FungiDB:DEHA2C04378g"/>
<dbReference type="eggNOG" id="KOG0335">
    <property type="taxonomic scope" value="Eukaryota"/>
</dbReference>
<dbReference type="HOGENOM" id="CLU_003041_18_0_1"/>
<dbReference type="InParanoid" id="Q6BV94"/>
<dbReference type="OMA" id="HSTIDFI"/>
<dbReference type="OrthoDB" id="10256233at2759"/>
<dbReference type="Proteomes" id="UP000000599">
    <property type="component" value="Chromosome C"/>
</dbReference>
<dbReference type="GO" id="GO:0005739">
    <property type="term" value="C:mitochondrion"/>
    <property type="evidence" value="ECO:0007669"/>
    <property type="project" value="UniProtKB-SubCell"/>
</dbReference>
<dbReference type="GO" id="GO:0005524">
    <property type="term" value="F:ATP binding"/>
    <property type="evidence" value="ECO:0007669"/>
    <property type="project" value="UniProtKB-KW"/>
</dbReference>
<dbReference type="GO" id="GO:0016887">
    <property type="term" value="F:ATP hydrolysis activity"/>
    <property type="evidence" value="ECO:0007669"/>
    <property type="project" value="RHEA"/>
</dbReference>
<dbReference type="GO" id="GO:0003723">
    <property type="term" value="F:RNA binding"/>
    <property type="evidence" value="ECO:0007669"/>
    <property type="project" value="UniProtKB-KW"/>
</dbReference>
<dbReference type="GO" id="GO:0003724">
    <property type="term" value="F:RNA helicase activity"/>
    <property type="evidence" value="ECO:0007669"/>
    <property type="project" value="UniProtKB-EC"/>
</dbReference>
<dbReference type="CDD" id="cd17965">
    <property type="entry name" value="DEADc_MRH4"/>
    <property type="match status" value="1"/>
</dbReference>
<dbReference type="CDD" id="cd18787">
    <property type="entry name" value="SF2_C_DEAD"/>
    <property type="match status" value="1"/>
</dbReference>
<dbReference type="Gene3D" id="3.40.50.300">
    <property type="entry name" value="P-loop containing nucleotide triphosphate hydrolases"/>
    <property type="match status" value="2"/>
</dbReference>
<dbReference type="InterPro" id="IPR011545">
    <property type="entry name" value="DEAD/DEAH_box_helicase_dom"/>
</dbReference>
<dbReference type="InterPro" id="IPR014001">
    <property type="entry name" value="Helicase_ATP-bd"/>
</dbReference>
<dbReference type="InterPro" id="IPR001650">
    <property type="entry name" value="Helicase_C-like"/>
</dbReference>
<dbReference type="InterPro" id="IPR027417">
    <property type="entry name" value="P-loop_NTPase"/>
</dbReference>
<dbReference type="PANTHER" id="PTHR24031">
    <property type="entry name" value="RNA HELICASE"/>
    <property type="match status" value="1"/>
</dbReference>
<dbReference type="Pfam" id="PF00270">
    <property type="entry name" value="DEAD"/>
    <property type="match status" value="1"/>
</dbReference>
<dbReference type="Pfam" id="PF00271">
    <property type="entry name" value="Helicase_C"/>
    <property type="match status" value="1"/>
</dbReference>
<dbReference type="SMART" id="SM00487">
    <property type="entry name" value="DEXDc"/>
    <property type="match status" value="1"/>
</dbReference>
<dbReference type="SMART" id="SM00490">
    <property type="entry name" value="HELICc"/>
    <property type="match status" value="1"/>
</dbReference>
<dbReference type="SUPFAM" id="SSF52540">
    <property type="entry name" value="P-loop containing nucleoside triphosphate hydrolases"/>
    <property type="match status" value="1"/>
</dbReference>
<dbReference type="PROSITE" id="PS51192">
    <property type="entry name" value="HELICASE_ATP_BIND_1"/>
    <property type="match status" value="1"/>
</dbReference>
<dbReference type="PROSITE" id="PS51194">
    <property type="entry name" value="HELICASE_CTER"/>
    <property type="match status" value="1"/>
</dbReference>